<reference key="1">
    <citation type="journal article" date="2000" name="Plant J.">
        <title>Functional analysis of the two Arabidopsis homologues of Toc34, a component of the chloroplast protein import apparatus.</title>
        <authorList>
            <person name="Gutensohn M."/>
            <person name="Schulz B.I."/>
            <person name="Nicolay P."/>
            <person name="Fluegge U.-I."/>
        </authorList>
    </citation>
    <scope>NUCLEOTIDE SEQUENCE [MRNA]</scope>
    <scope>CHARACTERIZATION</scope>
    <scope>DISRUPTION PHENOTYPE</scope>
    <scope>SUBCELLULAR LOCATION</scope>
    <scope>TISSUE SPECIFICITY</scope>
    <scope>DEVELOPMENTAL STAGE</scope>
    <scope>INTERACTION WITH TOC75</scope>
    <source>
        <strain>cv. Columbia</strain>
        <tissue>Etiolated seedling</tissue>
    </source>
</reference>
<reference key="2">
    <citation type="journal article" date="2000" name="Nature">
        <title>Sequence and analysis of chromosome 1 of the plant Arabidopsis thaliana.</title>
        <authorList>
            <person name="Theologis A."/>
            <person name="Ecker J.R."/>
            <person name="Palm C.J."/>
            <person name="Federspiel N.A."/>
            <person name="Kaul S."/>
            <person name="White O."/>
            <person name="Alonso J."/>
            <person name="Altafi H."/>
            <person name="Araujo R."/>
            <person name="Bowman C.L."/>
            <person name="Brooks S.Y."/>
            <person name="Buehler E."/>
            <person name="Chan A."/>
            <person name="Chao Q."/>
            <person name="Chen H."/>
            <person name="Cheuk R.F."/>
            <person name="Chin C.W."/>
            <person name="Chung M.K."/>
            <person name="Conn L."/>
            <person name="Conway A.B."/>
            <person name="Conway A.R."/>
            <person name="Creasy T.H."/>
            <person name="Dewar K."/>
            <person name="Dunn P."/>
            <person name="Etgu P."/>
            <person name="Feldblyum T.V."/>
            <person name="Feng J.-D."/>
            <person name="Fong B."/>
            <person name="Fujii C.Y."/>
            <person name="Gill J.E."/>
            <person name="Goldsmith A.D."/>
            <person name="Haas B."/>
            <person name="Hansen N.F."/>
            <person name="Hughes B."/>
            <person name="Huizar L."/>
            <person name="Hunter J.L."/>
            <person name="Jenkins J."/>
            <person name="Johnson-Hopson C."/>
            <person name="Khan S."/>
            <person name="Khaykin E."/>
            <person name="Kim C.J."/>
            <person name="Koo H.L."/>
            <person name="Kremenetskaia I."/>
            <person name="Kurtz D.B."/>
            <person name="Kwan A."/>
            <person name="Lam B."/>
            <person name="Langin-Hooper S."/>
            <person name="Lee A."/>
            <person name="Lee J.M."/>
            <person name="Lenz C.A."/>
            <person name="Li J.H."/>
            <person name="Li Y.-P."/>
            <person name="Lin X."/>
            <person name="Liu S.X."/>
            <person name="Liu Z.A."/>
            <person name="Luros J.S."/>
            <person name="Maiti R."/>
            <person name="Marziali A."/>
            <person name="Militscher J."/>
            <person name="Miranda M."/>
            <person name="Nguyen M."/>
            <person name="Nierman W.C."/>
            <person name="Osborne B.I."/>
            <person name="Pai G."/>
            <person name="Peterson J."/>
            <person name="Pham P.K."/>
            <person name="Rizzo M."/>
            <person name="Rooney T."/>
            <person name="Rowley D."/>
            <person name="Sakano H."/>
            <person name="Salzberg S.L."/>
            <person name="Schwartz J.R."/>
            <person name="Shinn P."/>
            <person name="Southwick A.M."/>
            <person name="Sun H."/>
            <person name="Tallon L.J."/>
            <person name="Tambunga G."/>
            <person name="Toriumi M.J."/>
            <person name="Town C.D."/>
            <person name="Utterback T."/>
            <person name="Van Aken S."/>
            <person name="Vaysberg M."/>
            <person name="Vysotskaia V.S."/>
            <person name="Walker M."/>
            <person name="Wu D."/>
            <person name="Yu G."/>
            <person name="Fraser C.M."/>
            <person name="Venter J.C."/>
            <person name="Davis R.W."/>
        </authorList>
    </citation>
    <scope>NUCLEOTIDE SEQUENCE [LARGE SCALE GENOMIC DNA]</scope>
    <source>
        <strain>cv. Columbia</strain>
    </source>
</reference>
<reference key="3">
    <citation type="journal article" date="2017" name="Plant J.">
        <title>Araport11: a complete reannotation of the Arabidopsis thaliana reference genome.</title>
        <authorList>
            <person name="Cheng C.Y."/>
            <person name="Krishnakumar V."/>
            <person name="Chan A.P."/>
            <person name="Thibaud-Nissen F."/>
            <person name="Schobel S."/>
            <person name="Town C.D."/>
        </authorList>
    </citation>
    <scope>GENOME REANNOTATION</scope>
    <source>
        <strain>cv. Columbia</strain>
    </source>
</reference>
<reference key="4">
    <citation type="journal article" date="2003" name="Science">
        <title>Empirical analysis of transcriptional activity in the Arabidopsis genome.</title>
        <authorList>
            <person name="Yamada K."/>
            <person name="Lim J."/>
            <person name="Dale J.M."/>
            <person name="Chen H."/>
            <person name="Shinn P."/>
            <person name="Palm C.J."/>
            <person name="Southwick A.M."/>
            <person name="Wu H.C."/>
            <person name="Kim C.J."/>
            <person name="Nguyen M."/>
            <person name="Pham P.K."/>
            <person name="Cheuk R.F."/>
            <person name="Karlin-Newmann G."/>
            <person name="Liu S.X."/>
            <person name="Lam B."/>
            <person name="Sakano H."/>
            <person name="Wu T."/>
            <person name="Yu G."/>
            <person name="Miranda M."/>
            <person name="Quach H.L."/>
            <person name="Tripp M."/>
            <person name="Chang C.H."/>
            <person name="Lee J.M."/>
            <person name="Toriumi M.J."/>
            <person name="Chan M.M."/>
            <person name="Tang C.C."/>
            <person name="Onodera C.S."/>
            <person name="Deng J.M."/>
            <person name="Akiyama K."/>
            <person name="Ansari Y."/>
            <person name="Arakawa T."/>
            <person name="Banh J."/>
            <person name="Banno F."/>
            <person name="Bowser L."/>
            <person name="Brooks S.Y."/>
            <person name="Carninci P."/>
            <person name="Chao Q."/>
            <person name="Choy N."/>
            <person name="Enju A."/>
            <person name="Goldsmith A.D."/>
            <person name="Gurjal M."/>
            <person name="Hansen N.F."/>
            <person name="Hayashizaki Y."/>
            <person name="Johnson-Hopson C."/>
            <person name="Hsuan V.W."/>
            <person name="Iida K."/>
            <person name="Karnes M."/>
            <person name="Khan S."/>
            <person name="Koesema E."/>
            <person name="Ishida J."/>
            <person name="Jiang P.X."/>
            <person name="Jones T."/>
            <person name="Kawai J."/>
            <person name="Kamiya A."/>
            <person name="Meyers C."/>
            <person name="Nakajima M."/>
            <person name="Narusaka M."/>
            <person name="Seki M."/>
            <person name="Sakurai T."/>
            <person name="Satou M."/>
            <person name="Tamse R."/>
            <person name="Vaysberg M."/>
            <person name="Wallender E.K."/>
            <person name="Wong C."/>
            <person name="Yamamura Y."/>
            <person name="Yuan S."/>
            <person name="Shinozaki K."/>
            <person name="Davis R.W."/>
            <person name="Theologis A."/>
            <person name="Ecker J.R."/>
        </authorList>
    </citation>
    <scope>NUCLEOTIDE SEQUENCE [LARGE SCALE MRNA]</scope>
    <source>
        <strain>cv. Columbia</strain>
    </source>
</reference>
<reference key="5">
    <citation type="submission" date="2006-06" db="EMBL/GenBank/DDBJ databases">
        <title>Arabidopsis ORF clones.</title>
        <authorList>
            <person name="Shinn P."/>
            <person name="Chen H."/>
            <person name="Kim C.J."/>
            <person name="Quinitio C."/>
            <person name="Ecker J.R."/>
        </authorList>
    </citation>
    <scope>NUCLEOTIDE SEQUENCE [LARGE SCALE MRNA]</scope>
    <source>
        <strain>cv. Columbia</strain>
    </source>
</reference>
<reference key="6">
    <citation type="journal article" date="2001" name="Plant Cell">
        <title>Leaf-specific upregulation of chloroplast translocon genes by a CCT motif-containing protein, CIA2.</title>
        <authorList>
            <person name="Sun C.-W."/>
            <person name="Chen L.-J."/>
            <person name="Lin L.-C."/>
            <person name="Li H.-M."/>
        </authorList>
    </citation>
    <scope>INDUCTION</scope>
</reference>
<reference key="7">
    <citation type="journal article" date="2001" name="Plant Physiol.">
        <title>Chloroplast protein translocon components atToc159 and atToc33 are not essential for chloroplast biogenesis in guard cells and root cells.</title>
        <authorList>
            <person name="Yu T.-S."/>
            <person name="Li H.-M."/>
        </authorList>
    </citation>
    <scope>FUNCTION</scope>
    <scope>DISRUPTION PHENOTYPE</scope>
</reference>
<reference key="8">
    <citation type="journal article" date="2002" name="J. Cell Biol.">
        <title>The targeting of the atToc159 preprotein receptor to the chloroplast outer membrane is mediated by its GTPase domain and is regulated by GTP.</title>
        <authorList>
            <person name="Smith M.D."/>
            <person name="Hiltbrunner A."/>
            <person name="Kessler F."/>
            <person name="Schnell D.J."/>
        </authorList>
    </citation>
    <scope>INTERACTION WITH TOC159</scope>
</reference>
<reference key="9">
    <citation type="journal article" date="2003" name="Biochemistry">
        <title>Two Toc34 homologues with different properties.</title>
        <authorList>
            <person name="Jelic M."/>
            <person name="Soll J."/>
            <person name="Schleiff E."/>
        </authorList>
    </citation>
    <scope>FUNCTION</scope>
    <scope>BIOPHYSICOCHEMICAL PROPERTIES</scope>
    <scope>PHOSPHORYLATION AT SER-181</scope>
    <scope>DIMERIZATION WITH TOC34</scope>
    <scope>MUTAGENESIS OF SER-170; SER-175; SER-181; SER-190 AND SER-200</scope>
</reference>
<reference key="10">
    <citation type="journal article" date="2003" name="FEBS Lett.">
        <title>Unusual nucleotide-binding properties of the chloroplast protein import receptor, atToc33.</title>
        <authorList>
            <person name="Aronsson H."/>
            <person name="Combe J."/>
            <person name="Jarvis P."/>
        </authorList>
    </citation>
    <scope>FUNCTION</scope>
    <scope>MUTAGENESIS OF GLU-208; ASP-217; ASP-219 AND GLU-220</scope>
</reference>
<reference key="11">
    <citation type="journal article" date="2003" name="J. Biol. Chem.">
        <title>Dimerization of Toc-GTPases at the chloroplast protein import machinery.</title>
        <authorList>
            <person name="Weibel P."/>
            <person name="Hiltbrunner A."/>
            <person name="Brand L."/>
            <person name="Kessler F."/>
        </authorList>
    </citation>
    <scope>FUNCTION</scope>
    <scope>DIMERIZATION WITH TOC159</scope>
    <scope>MUTAGENESIS OF ARG-130</scope>
</reference>
<reference key="12">
    <citation type="journal article" date="2003" name="J. Biol. Chem.">
        <title>The roles of Toc34 and Toc75 in targeting the Toc159 preprotein receptor to chloroplasts.</title>
        <authorList>
            <person name="Wallas T.R."/>
            <person name="Smith M.D."/>
            <person name="Sanchez-Nieto S."/>
            <person name="Schnell D.J."/>
        </authorList>
    </citation>
    <scope>FUNCTION</scope>
    <scope>SUBCELLULAR LOCATION</scope>
    <scope>MUTAGENESIS OF 45-GLY--SER-50</scope>
    <scope>INTERACTION WITH TOC159</scope>
</reference>
<reference key="13">
    <citation type="journal article" date="2003" name="Plant Cell">
        <title>The Arabidopsis ppi1 mutant is specifically defective in the expression, chloroplast import, and accumulation of photosynthetic proteins.</title>
        <authorList>
            <person name="Kubis S."/>
            <person name="Baldwin A."/>
            <person name="Patel R."/>
            <person name="Razzaq A."/>
            <person name="Dupree P."/>
            <person name="Lilley K."/>
            <person name="Kurth J."/>
            <person name="Leister D."/>
            <person name="Jarvis P."/>
        </authorList>
    </citation>
    <scope>FUNCTION</scope>
    <scope>DISRUPTION PHENOTYPE</scope>
    <scope>TISSUE SPECIFICITY</scope>
    <scope>INDUCTION BY LIGHT</scope>
    <scope>DEVELOPMENTAL STAGE</scope>
</reference>
<reference key="14">
    <citation type="journal article" date="2003" name="Mol. Cell. Proteomics">
        <title>Proteomics of the chloroplast envelope membranes from Arabidopsis thaliana.</title>
        <authorList>
            <person name="Ferro M."/>
            <person name="Salvi D."/>
            <person name="Brugiere S."/>
            <person name="Miras S."/>
            <person name="Kowalski S."/>
            <person name="Louwagie M."/>
            <person name="Garin J."/>
            <person name="Joyard J."/>
            <person name="Rolland N."/>
        </authorList>
    </citation>
    <scope>IDENTIFICATION BY MASS SPECTROMETRY</scope>
    <scope>SUBCELLULAR LOCATION [LARGE SCALE ANALYSIS]</scope>
    <source>
        <strain>cv. Wassilewskija</strain>
    </source>
</reference>
<reference key="15">
    <citation type="journal article" date="2004" name="Plant J.">
        <title>An outer envelope membrane component of the plastid protein import apparatus plays an essential role in Arabidopsis.</title>
        <authorList>
            <person name="Constan D."/>
            <person name="Patel R."/>
            <person name="Keegstra K."/>
            <person name="Jarvis P."/>
        </authorList>
    </citation>
    <scope>FUNCTION</scope>
</reference>
<reference key="16">
    <citation type="journal article" date="2005" name="Plant J.">
        <title>A role of Toc33 in the protochlorophyllide-dependent plastid import pathway of NADPH:protochlorophyllide oxidoreductase (POR) A.</title>
        <authorList>
            <person name="Reinbothe S."/>
            <person name="Pollmann S."/>
            <person name="Springer A."/>
            <person name="James R.J."/>
            <person name="Tichtinsky G."/>
            <person name="Reinbothe C."/>
        </authorList>
    </citation>
    <scope>INTERACTION WITH PPORA AND OP161</scope>
</reference>
<reference key="17">
    <citation type="journal article" date="2006" name="FEBS Lett.">
        <title>In vivo assessment of the significance of phosphorylation of the Arabidopsis chloroplast protein import receptor, atToc33.</title>
        <authorList>
            <person name="Aronsson H."/>
            <person name="Combe J."/>
            <person name="Patel R."/>
            <person name="Jarvis P."/>
        </authorList>
    </citation>
    <scope>FUNCTION</scope>
    <scope>PHOSPHORYLATION AT SER-181</scope>
    <scope>MUTAGENESIS OF SER-181</scope>
</reference>
<reference key="18">
    <citation type="journal article" date="2006" name="Plant Biol.">
        <title>Deletion of core components of the plastid protein import machinery causes differential arrest of embryo development in Arabidopsis thaliana.</title>
        <authorList>
            <person name="Hust B."/>
            <person name="Gutensohn M."/>
        </authorList>
    </citation>
    <scope>FUNCTION</scope>
</reference>
<reference key="19">
    <citation type="journal article" date="2007" name="FEBS Lett.">
        <title>Phospho-mimicry mutant of atToc33 affects early development of Arabidopsis thaliana.</title>
        <authorList>
            <person name="Oreb M."/>
            <person name="Zoryan M."/>
            <person name="Vojta A."/>
            <person name="Maier U.G."/>
            <person name="Eichacker L.A."/>
            <person name="Schleiff E."/>
        </authorList>
    </citation>
    <scope>FUNCTION</scope>
    <scope>PHOSPHORYLATION AT SER-181</scope>
</reference>
<reference key="20">
    <citation type="journal article" date="2007" name="J. Biol. Chem.">
        <title>In vitro comparative kinetic analysis of the chloroplast Toc GTPases.</title>
        <authorList>
            <person name="Reddick L.E."/>
            <person name="Vaughn M.D."/>
            <person name="Wright S.J."/>
            <person name="Campbell I.M."/>
            <person name="Bruce B.D."/>
        </authorList>
    </citation>
    <scope>BIOPHYSICOCHEMICAL PROPERTIES</scope>
</reference>
<reference key="21">
    <citation type="journal article" date="2012" name="Science">
        <title>Chloroplast biogenesis is regulated by direct action of the ubiquitin-proteasome system.</title>
        <authorList>
            <person name="Ling Q."/>
            <person name="Huang W."/>
            <person name="Baldwin A."/>
            <person name="Jarvis P."/>
        </authorList>
    </citation>
    <scope>INTERACTION WITH SP1</scope>
</reference>
<reference key="22">
    <citation type="journal article" date="2007" name="J. Biol. Chem.">
        <title>Dimerization is important for the GTPase activity of chloroplast translocon components atToc33 and psToc159.</title>
        <authorList>
            <person name="Yeh Y.-H."/>
            <person name="Kesavulu M.M."/>
            <person name="Li H.-M."/>
            <person name="Wu S.-Z."/>
            <person name="Sun Y.-J."/>
            <person name="Konozy E.H.E."/>
            <person name="Hsiao C.-D."/>
        </authorList>
    </citation>
    <scope>X-RAY CRYSTALLOGRAPHY (3.2 ANGSTROMS) OF 2-250 IN COMPLEX WITH GDP AND MAGNESIUM</scope>
    <scope>DIMERIZATION</scope>
    <scope>MUTAGENESIS OF ARG-130</scope>
</reference>
<reference key="23">
    <citation type="journal article" date="2008" name="J. Biol. Chem.">
        <title>On the significance of Toc-GTPase homodimers.</title>
        <authorList>
            <person name="Koenig P."/>
            <person name="Oreb M."/>
            <person name="Rippe K."/>
            <person name="Muhle-Goll C."/>
            <person name="Sinning I."/>
            <person name="Schleiff E."/>
            <person name="Tews I."/>
        </authorList>
    </citation>
    <scope>X-RAY CRYSTALLOGRAPHY (1.96 ANGSTROMS) OF 1-251 IN COMPLEX WITH GDP AND MAGNESIUM</scope>
    <scope>DIMERIZATION</scope>
    <scope>MUTAGENESIS OF ARG-130</scope>
</reference>
<reference key="24">
    <citation type="journal article" date="2008" name="Structure">
        <title>The GTPase cycle of the chloroplast import receptors Toc33/Toc34: implications from monomeric and dimeric structures.</title>
        <authorList>
            <person name="Koenig P."/>
            <person name="Oreb M."/>
            <person name="Hoefle A."/>
            <person name="Kaltofen S."/>
            <person name="Rippe K."/>
            <person name="Sinning I."/>
            <person name="Schleiff E."/>
            <person name="Tews I."/>
        </authorList>
    </citation>
    <scope>X-RAY CRYSTALLOGRAPHY (2.85 ANGSTROMS) OF 1-251 IN COMPLEX WITH GDP; GNP AND MAGNESIUM</scope>
    <scope>DIMERIZATION</scope>
</reference>
<keyword id="KW-0002">3D-structure</keyword>
<keyword id="KW-0150">Chloroplast</keyword>
<keyword id="KW-0342">GTP-binding</keyword>
<keyword id="KW-0378">Hydrolase</keyword>
<keyword id="KW-0460">Magnesium</keyword>
<keyword id="KW-0472">Membrane</keyword>
<keyword id="KW-0479">Metal-binding</keyword>
<keyword id="KW-0547">Nucleotide-binding</keyword>
<keyword id="KW-0597">Phosphoprotein</keyword>
<keyword id="KW-0934">Plastid</keyword>
<keyword id="KW-1002">Plastid outer membrane</keyword>
<keyword id="KW-0653">Protein transport</keyword>
<keyword id="KW-0675">Receptor</keyword>
<keyword id="KW-1185">Reference proteome</keyword>
<keyword id="KW-0812">Transmembrane</keyword>
<keyword id="KW-1133">Transmembrane helix</keyword>
<keyword id="KW-0813">Transport</keyword>
<gene>
    <name type="primary">TOC33</name>
    <name type="synonym">PPI1</name>
    <name type="ordered locus">At1g02280</name>
    <name type="ORF">T7I23.11</name>
</gene>
<comment type="function">
    <text evidence="5 7 9 10 11 12 13 15 16 19">GTPase involved in protein precursor import into chloroplasts. Seems to recognize chloroplast-destined precursor proteins and regulate their presentation to the translocation channel through GTP hydrolysis. Binds GTP, GDP, XTP, but not ATP. Probably specialized in the import of nuclear encoded photosynthetic preproteins from the cytoplasm to the chloroplast, especially during early development stages.</text>
</comment>
<comment type="cofactor">
    <cofactor evidence="18 20 21">
        <name>Mg(2+)</name>
        <dbReference type="ChEBI" id="CHEBI:18420"/>
    </cofactor>
    <text evidence="18 20 21">Binds 1 Mg(2+) ion by subunit.</text>
</comment>
<comment type="biophysicochemical properties">
    <kinetics>
        <KM evidence="7 17">290 nM for GDP (at pH 7.4)</KM>
        <KM evidence="7 17">5.7 uM for GTP (at pH 7.6 and 25 degrees Celsius)</KM>
        <Vmax evidence="7 17">1040.0 nmol/min/ug enzyme with GTP as substrate (at pH 7.4)</Vmax>
    </kinetics>
</comment>
<comment type="subunit">
    <text evidence="3 6 12 14 18 20 21 22">Homodimer, heterodimer with TOC34 and TOC159, and monomer. The homodimerization and the dimerization with TOC159 require the binding of GTP on Arg-130, and a hypothetical coGAP factor. The dimeric form has a higher GTPase activity than the monomeric form. Part of the TOC core complex that includes 1 protein for the specific recognition of transit peptides surrounded by a ring composed of four proteins forming translocation channels, and four to five GTP-binding proteins providing energy. This core complex can interact with components of the TIC complex to form a larger import complex. Chloroplastic protein precursor such as prSS (precursor of the RuBisCO small subunit) interacts with these complexes. The TOC complex contains a specific subset of polar lipids such as digalactosyldiacylglyceride (DGDG), phosphatidylcholine (PC) and phosphatidylglycerol (PG). Interacts at least with TOC75-3. Forms large complexes including TOC33, pPORA and OEP161 during pPORA import into plastids at the plastid envelope membrane (PubMed:10998188, PubMed:12473690, PubMed:12951325, PubMed:15773849, PubMed:17337454, PubMed:18400179, PubMed:18541539). Interacts with SP1 (PubMed:23118188).</text>
</comment>
<comment type="interaction">
    <interactant intactId="EBI-639377">
        <id>O23680</id>
    </interactant>
    <interactant intactId="EBI-979321">
        <id>Q39016</id>
        <label>CPK11</label>
    </interactant>
    <organismsDiffer>false</organismsDiffer>
    <experiments>4</experiments>
</comment>
<comment type="interaction">
    <interactant intactId="EBI-639377">
        <id>O23680</id>
    </interactant>
    <interactant intactId="EBI-979475">
        <id>Q38869</id>
        <label>CPK4</label>
    </interactant>
    <organismsDiffer>false</organismsDiffer>
    <experiments>5</experiments>
</comment>
<comment type="interaction">
    <interactant intactId="EBI-639377">
        <id>O23680</id>
    </interactant>
    <interactant intactId="EBI-6559199">
        <id>Q8L7N4</id>
        <label>SP1</label>
    </interactant>
    <organismsDiffer>false</organismsDiffer>
    <experiments>2</experiments>
</comment>
<comment type="interaction">
    <interactant intactId="EBI-639377">
        <id>O23680</id>
    </interactant>
    <interactant intactId="EBI-639377">
        <id>O23680</id>
        <label>TOC33</label>
    </interactant>
    <organismsDiffer>false</organismsDiffer>
    <experiments>4</experiments>
</comment>
<comment type="subcellular location">
    <subcellularLocation>
        <location evidence="3 8 12">Plastid</location>
        <location evidence="3 8 12">Chloroplast outer membrane</location>
        <topology evidence="3 8 12">Single-pass membrane protein</topology>
    </subcellularLocation>
    <text>May contain beta barrel transmembrane regions.</text>
</comment>
<comment type="tissue specificity">
    <text evidence="3 11">Mostly expressed in seedlings and flowers, and, to a lower extent, in roots, stems, and leaves.</text>
</comment>
<comment type="developmental stage">
    <text evidence="3 11">Mostly expressed in photosynthetic tissues undergoing rapid growth. Observed in cotyledons and vascular tissues of hypocotyls of young seedling. In roots, restricted to apical and lateral meristems, and vascular bundles. In stems, mostly detected in the upper part. Expressed in young and middle-aged leaves. In flowers, confined to sepals.</text>
</comment>
<comment type="induction">
    <text evidence="4 11">Up-regulated by CIA2 in leaves. Induced in light but repressed in darkness.</text>
</comment>
<comment type="PTM">
    <text evidence="7 15 19">Phosphorylated by a kinase present in the outer envelope of chloroplast. When Ser-181 is phosphorylated, the binding to preprotein, GTP and GDP is inhibited, and thus, GTPase activity is repressed.</text>
</comment>
<comment type="disruption phenotype">
    <text evidence="3 5 11">Plants exhibits a pale yellowish phenotype.</text>
</comment>
<comment type="similarity">
    <text evidence="23">Belongs to the TRAFAC class TrmE-Era-EngA-EngB-Septin-like GTPase superfamily. AIG1/Toc34/Toc159-like paraseptin GTPase family. TOC34 subfamily.</text>
</comment>
<protein>
    <recommendedName>
        <fullName>Translocase of chloroplast 33, chloroplastic</fullName>
        <shortName>AtToc33</shortName>
        <ecNumber>3.6.5.-</ecNumber>
    </recommendedName>
    <alternativeName>
        <fullName>33 kDa chloroplast outer envelope protein</fullName>
    </alternativeName>
    <alternativeName>
        <fullName>Plastid protein import 1</fullName>
    </alternativeName>
</protein>
<evidence type="ECO:0000255" key="1"/>
<evidence type="ECO:0000255" key="2">
    <source>
        <dbReference type="PROSITE-ProRule" id="PRU01057"/>
    </source>
</evidence>
<evidence type="ECO:0000269" key="3">
    <source>
    </source>
</evidence>
<evidence type="ECO:0000269" key="4">
    <source>
    </source>
</evidence>
<evidence type="ECO:0000269" key="5">
    <source>
    </source>
</evidence>
<evidence type="ECO:0000269" key="6">
    <source>
    </source>
</evidence>
<evidence type="ECO:0000269" key="7">
    <source>
    </source>
</evidence>
<evidence type="ECO:0000269" key="8">
    <source>
    </source>
</evidence>
<evidence type="ECO:0000269" key="9">
    <source>
    </source>
</evidence>
<evidence type="ECO:0000269" key="10">
    <source>
    </source>
</evidence>
<evidence type="ECO:0000269" key="11">
    <source>
    </source>
</evidence>
<evidence type="ECO:0000269" key="12">
    <source>
    </source>
</evidence>
<evidence type="ECO:0000269" key="13">
    <source>
    </source>
</evidence>
<evidence type="ECO:0000269" key="14">
    <source>
    </source>
</evidence>
<evidence type="ECO:0000269" key="15">
    <source>
    </source>
</evidence>
<evidence type="ECO:0000269" key="16">
    <source>
    </source>
</evidence>
<evidence type="ECO:0000269" key="17">
    <source>
    </source>
</evidence>
<evidence type="ECO:0000269" key="18">
    <source>
    </source>
</evidence>
<evidence type="ECO:0000269" key="19">
    <source>
    </source>
</evidence>
<evidence type="ECO:0000269" key="20">
    <source>
    </source>
</evidence>
<evidence type="ECO:0000269" key="21">
    <source>
    </source>
</evidence>
<evidence type="ECO:0000269" key="22">
    <source>
    </source>
</evidence>
<evidence type="ECO:0000305" key="23"/>
<evidence type="ECO:0000305" key="24">
    <source>
    </source>
</evidence>
<evidence type="ECO:0007744" key="25">
    <source>
        <dbReference type="PDB" id="3BB4"/>
    </source>
</evidence>
<evidence type="ECO:0007829" key="26">
    <source>
        <dbReference type="PDB" id="2J3E"/>
    </source>
</evidence>
<evidence type="ECO:0007829" key="27">
    <source>
        <dbReference type="PDB" id="3BB3"/>
    </source>
</evidence>
<evidence type="ECO:0007829" key="28">
    <source>
        <dbReference type="PDB" id="3BB4"/>
    </source>
</evidence>
<evidence type="ECO:0007829" key="29">
    <source>
        <dbReference type="PDB" id="3DEF"/>
    </source>
</evidence>
<feature type="chain" id="PRO_0000352655" description="Translocase of chloroplast 33, chloroplastic">
    <location>
        <begin position="1"/>
        <end position="297"/>
    </location>
</feature>
<feature type="transmembrane region" description="Helical" evidence="1">
    <location>
        <begin position="37"/>
        <end position="53"/>
    </location>
</feature>
<feature type="domain" description="AIG1-type G" evidence="2">
    <location>
        <begin position="34"/>
        <end position="258"/>
    </location>
</feature>
<feature type="region of interest" description="Homodimerization" evidence="24">
    <location>
        <begin position="65"/>
        <end position="68"/>
    </location>
</feature>
<feature type="region of interest" description="Homodimerization" evidence="24">
    <location>
        <begin position="125"/>
        <end position="130"/>
    </location>
</feature>
<feature type="binding site" evidence="20 25">
    <location>
        <begin position="46"/>
        <end position="51"/>
    </location>
    <ligand>
        <name>GTP</name>
        <dbReference type="ChEBI" id="CHEBI:37565"/>
    </ligand>
</feature>
<feature type="binding site" evidence="18 20 21">
    <location>
        <position position="50"/>
    </location>
    <ligand>
        <name>Mg(2+)</name>
        <dbReference type="ChEBI" id="CHEBI:18420"/>
    </ligand>
</feature>
<feature type="binding site" evidence="24">
    <location>
        <begin position="65"/>
        <end position="70"/>
    </location>
    <ligand>
        <name>GTP</name>
        <dbReference type="ChEBI" id="CHEBI:37565"/>
    </ligand>
</feature>
<feature type="binding site" evidence="18 20 21">
    <location>
        <position position="68"/>
    </location>
    <ligand>
        <name>Mg(2+)</name>
        <dbReference type="ChEBI" id="CHEBI:18420"/>
    </ligand>
</feature>
<feature type="binding site" evidence="20 25">
    <location>
        <position position="160"/>
    </location>
    <ligand>
        <name>GTP</name>
        <dbReference type="ChEBI" id="CHEBI:37565"/>
    </ligand>
</feature>
<feature type="binding site" evidence="20 25">
    <location>
        <begin position="208"/>
        <end position="209"/>
    </location>
    <ligand>
        <name>GTP</name>
        <dbReference type="ChEBI" id="CHEBI:37565"/>
    </ligand>
</feature>
<feature type="modified residue" description="Phosphoserine" evidence="7 15 19">
    <location>
        <position position="181"/>
    </location>
</feature>
<feature type="mutagenesis site" description="Reduced GTPase activity and impaired interaction with TOC159." evidence="12">
    <original>GGVGKS</original>
    <variation>RGVGNR</variation>
    <location>
        <begin position="45"/>
        <end position="50"/>
    </location>
</feature>
<feature type="mutagenesis site" description="Loss of homidimerization and heterodimerization with TOC159, reduction of GTPase activity." evidence="10 18 21">
    <original>R</original>
    <variation>A</variation>
    <location>
        <position position="130"/>
    </location>
</feature>
<feature type="mutagenesis site" description="Normal phosphorylation." evidence="7">
    <original>S</original>
    <variation>A</variation>
    <location>
        <position position="170"/>
    </location>
</feature>
<feature type="mutagenesis site" description="Normal phosphorylation." evidence="7">
    <original>S</original>
    <variation>A</variation>
    <location>
        <position position="175"/>
    </location>
</feature>
<feature type="mutagenesis site" description="Loss of phosphorylation, normal activity." evidence="7 15">
    <original>S</original>
    <variation>A</variation>
    <location>
        <position position="181"/>
    </location>
</feature>
<feature type="mutagenesis site" description="According to PubMed:16412428, supposed to mimic the effects of phosphoserine, but normal activity." evidence="7 15">
    <original>S</original>
    <variation>D</variation>
    <variation>E</variation>
    <location>
        <position position="181"/>
    </location>
</feature>
<feature type="mutagenesis site" description="Phosphothreonine instead of phosphoserine." evidence="7 15">
    <original>S</original>
    <variation>T</variation>
    <location>
        <position position="181"/>
    </location>
</feature>
<feature type="mutagenesis site" description="Normal phosphorylation." evidence="7">
    <original>S</original>
    <variation>A</variation>
    <location>
        <position position="190"/>
    </location>
</feature>
<feature type="mutagenesis site" description="Normal phosphorylation." evidence="7">
    <original>S</original>
    <variation>A</variation>
    <location>
        <position position="200"/>
    </location>
</feature>
<feature type="mutagenesis site" description="Normal GTPase activity, but weaker nucleotide binding." evidence="9">
    <original>E</original>
    <variation>Q</variation>
    <location>
        <position position="208"/>
    </location>
</feature>
<feature type="mutagenesis site" description="Normal GTPase activity." evidence="9">
    <original>D</original>
    <variation>N</variation>
    <location>
        <position position="217"/>
    </location>
</feature>
<feature type="mutagenesis site" description="Normal GTPase activity." evidence="9">
    <original>D</original>
    <variation>N</variation>
    <location>
        <position position="219"/>
    </location>
</feature>
<feature type="mutagenesis site" description="Normal GTPase activity." evidence="9">
    <original>E</original>
    <variation>Q</variation>
    <location>
        <position position="220"/>
    </location>
</feature>
<feature type="sequence conflict" description="In Ref. 4; AAK68809." evidence="23" ref="4">
    <original>G</original>
    <variation>A</variation>
    <location>
        <position position="147"/>
    </location>
</feature>
<feature type="helix" evidence="29">
    <location>
        <begin position="9"/>
        <end position="12"/>
    </location>
</feature>
<feature type="helix" evidence="29">
    <location>
        <begin position="16"/>
        <end position="31"/>
    </location>
</feature>
<feature type="strand" evidence="29">
    <location>
        <begin position="36"/>
        <end position="43"/>
    </location>
</feature>
<feature type="helix" evidence="29">
    <location>
        <begin position="49"/>
        <end position="57"/>
    </location>
</feature>
<feature type="strand" evidence="26">
    <location>
        <begin position="58"/>
        <end position="60"/>
    </location>
</feature>
<feature type="strand" evidence="29">
    <location>
        <begin position="75"/>
        <end position="81"/>
    </location>
</feature>
<feature type="strand" evidence="29">
    <location>
        <begin position="84"/>
        <end position="90"/>
    </location>
</feature>
<feature type="strand" evidence="29">
    <location>
        <begin position="94"/>
        <end position="96"/>
    </location>
</feature>
<feature type="strand" evidence="26">
    <location>
        <begin position="97"/>
        <end position="100"/>
    </location>
</feature>
<feature type="helix" evidence="29">
    <location>
        <begin position="102"/>
        <end position="111"/>
    </location>
</feature>
<feature type="turn" evidence="29">
    <location>
        <begin position="112"/>
        <end position="114"/>
    </location>
</feature>
<feature type="strand" evidence="29">
    <location>
        <begin position="119"/>
        <end position="127"/>
    </location>
</feature>
<feature type="helix" evidence="29">
    <location>
        <begin position="133"/>
        <end position="146"/>
    </location>
</feature>
<feature type="helix" evidence="29">
    <location>
        <begin position="148"/>
        <end position="153"/>
    </location>
</feature>
<feature type="strand" evidence="29">
    <location>
        <begin position="154"/>
        <end position="159"/>
    </location>
</feature>
<feature type="helix" evidence="29">
    <location>
        <begin position="171"/>
        <end position="190"/>
    </location>
</feature>
<feature type="helix" evidence="26">
    <location>
        <begin position="191"/>
        <end position="193"/>
    </location>
</feature>
<feature type="helix" evidence="29">
    <location>
        <begin position="194"/>
        <end position="200"/>
    </location>
</feature>
<feature type="strand" evidence="29">
    <location>
        <begin position="203"/>
        <end position="206"/>
    </location>
</feature>
<feature type="strand" evidence="26">
    <location>
        <begin position="224"/>
        <end position="228"/>
    </location>
</feature>
<feature type="helix" evidence="29">
    <location>
        <begin position="229"/>
        <end position="241"/>
    </location>
</feature>
<feature type="strand" evidence="28">
    <location>
        <begin position="243"/>
        <end position="245"/>
    </location>
</feature>
<feature type="strand" evidence="27">
    <location>
        <begin position="248"/>
        <end position="250"/>
    </location>
</feature>
<name>TOC33_ARATH</name>
<proteinExistence type="evidence at protein level"/>
<sequence>MGSLVREWVGFQQFPAATQEKLIEFFGKLKQKDMNSMTVLVLGKGGVGKSSTVNSLIGEQVVRVSPFQAEGLRPVMVSRTMGGFTINIIDTPGLVEAGYVNHQALELIKGFLVNRTIDVLLYVDRLDVYRVDELDKQVVIAITQTFGKEIWCKTLLVLTHAQFSPPDELSYETFSSKRSDSLLKTIRAGSKMRKQEFEDSAIAVVYAENSGRCSKNDKDEKALPNGEAWIPNLVKAITDVATNQRKAIHVDKKMVDGSYSDDKGKKLIPLIIGAQYLIVKMIQGAIRNDIKTSGKPL</sequence>
<organism>
    <name type="scientific">Arabidopsis thaliana</name>
    <name type="common">Mouse-ear cress</name>
    <dbReference type="NCBI Taxonomy" id="3702"/>
    <lineage>
        <taxon>Eukaryota</taxon>
        <taxon>Viridiplantae</taxon>
        <taxon>Streptophyta</taxon>
        <taxon>Embryophyta</taxon>
        <taxon>Tracheophyta</taxon>
        <taxon>Spermatophyta</taxon>
        <taxon>Magnoliopsida</taxon>
        <taxon>eudicotyledons</taxon>
        <taxon>Gunneridae</taxon>
        <taxon>Pentapetalae</taxon>
        <taxon>rosids</taxon>
        <taxon>malvids</taxon>
        <taxon>Brassicales</taxon>
        <taxon>Brassicaceae</taxon>
        <taxon>Camelineae</taxon>
        <taxon>Arabidopsis</taxon>
    </lineage>
</organism>
<accession>O23680</accession>
<accession>Q94B42</accession>
<accession>Q9GDD3</accession>
<dbReference type="EC" id="3.6.5.-"/>
<dbReference type="EMBL" id="AJ010724">
    <property type="protein sequence ID" value="CAC17698.1"/>
    <property type="molecule type" value="mRNA"/>
</dbReference>
<dbReference type="EMBL" id="U89959">
    <property type="protein sequence ID" value="AAC24375.1"/>
    <property type="molecule type" value="Genomic_DNA"/>
</dbReference>
<dbReference type="EMBL" id="CP002684">
    <property type="protein sequence ID" value="AEE27409.1"/>
    <property type="molecule type" value="Genomic_DNA"/>
</dbReference>
<dbReference type="EMBL" id="CP002684">
    <property type="protein sequence ID" value="AEE27410.1"/>
    <property type="molecule type" value="Genomic_DNA"/>
</dbReference>
<dbReference type="EMBL" id="AY042869">
    <property type="protein sequence ID" value="AAK68809.1"/>
    <property type="molecule type" value="mRNA"/>
</dbReference>
<dbReference type="EMBL" id="AY056448">
    <property type="protein sequence ID" value="AAL08304.1"/>
    <property type="molecule type" value="mRNA"/>
</dbReference>
<dbReference type="EMBL" id="BT025654">
    <property type="protein sequence ID" value="ABF74715.1"/>
    <property type="molecule type" value="mRNA"/>
</dbReference>
<dbReference type="RefSeq" id="NP_001117215.1">
    <property type="nucleotide sequence ID" value="NM_001123743.2"/>
</dbReference>
<dbReference type="RefSeq" id="NP_171730.1">
    <property type="nucleotide sequence ID" value="NM_100108.5"/>
</dbReference>
<dbReference type="PDB" id="2J3E">
    <property type="method" value="X-ray"/>
    <property type="resolution" value="3.20 A"/>
    <property type="chains" value="A=2-250"/>
</dbReference>
<dbReference type="PDB" id="3BB3">
    <property type="method" value="X-ray"/>
    <property type="resolution" value="2.94 A"/>
    <property type="chains" value="A=1-251"/>
</dbReference>
<dbReference type="PDB" id="3BB4">
    <property type="method" value="X-ray"/>
    <property type="resolution" value="2.85 A"/>
    <property type="chains" value="A=1-251"/>
</dbReference>
<dbReference type="PDB" id="3DEF">
    <property type="method" value="X-ray"/>
    <property type="resolution" value="1.96 A"/>
    <property type="chains" value="A=1-251"/>
</dbReference>
<dbReference type="PDBsum" id="2J3E"/>
<dbReference type="PDBsum" id="3BB3"/>
<dbReference type="PDBsum" id="3BB4"/>
<dbReference type="PDBsum" id="3DEF"/>
<dbReference type="SMR" id="O23680"/>
<dbReference type="BioGRID" id="24483">
    <property type="interactions" value="8"/>
</dbReference>
<dbReference type="FunCoup" id="O23680">
    <property type="interactions" value="393"/>
</dbReference>
<dbReference type="IntAct" id="O23680">
    <property type="interactions" value="8"/>
</dbReference>
<dbReference type="STRING" id="3702.O23680"/>
<dbReference type="iPTMnet" id="O23680"/>
<dbReference type="PaxDb" id="3702-AT1G02280.1"/>
<dbReference type="ProteomicsDB" id="234323"/>
<dbReference type="DNASU" id="839248"/>
<dbReference type="EnsemblPlants" id="AT1G02280.1">
    <property type="protein sequence ID" value="AT1G02280.1"/>
    <property type="gene ID" value="AT1G02280"/>
</dbReference>
<dbReference type="EnsemblPlants" id="AT1G02280.2">
    <property type="protein sequence ID" value="AT1G02280.2"/>
    <property type="gene ID" value="AT1G02280"/>
</dbReference>
<dbReference type="GeneID" id="839248"/>
<dbReference type="Gramene" id="AT1G02280.1">
    <property type="protein sequence ID" value="AT1G02280.1"/>
    <property type="gene ID" value="AT1G02280"/>
</dbReference>
<dbReference type="Gramene" id="AT1G02280.2">
    <property type="protein sequence ID" value="AT1G02280.2"/>
    <property type="gene ID" value="AT1G02280"/>
</dbReference>
<dbReference type="KEGG" id="ath:AT1G02280"/>
<dbReference type="Araport" id="AT1G02280"/>
<dbReference type="TAIR" id="AT1G02280">
    <property type="gene designation" value="TOC33"/>
</dbReference>
<dbReference type="eggNOG" id="ENOG502QSV2">
    <property type="taxonomic scope" value="Eukaryota"/>
</dbReference>
<dbReference type="HOGENOM" id="CLU_051932_0_0_1"/>
<dbReference type="InParanoid" id="O23680"/>
<dbReference type="OMA" id="HEIQDHA"/>
<dbReference type="OrthoDB" id="8954335at2759"/>
<dbReference type="PhylomeDB" id="O23680"/>
<dbReference type="BioCyc" id="ARA:AT1G02280-MONOMER"/>
<dbReference type="BRENDA" id="3.6.5.2">
    <property type="organism ID" value="399"/>
</dbReference>
<dbReference type="EvolutionaryTrace" id="O23680"/>
<dbReference type="PRO" id="PR:O23680"/>
<dbReference type="Proteomes" id="UP000006548">
    <property type="component" value="Chromosome 1"/>
</dbReference>
<dbReference type="ExpressionAtlas" id="O23680">
    <property type="expression patterns" value="baseline and differential"/>
</dbReference>
<dbReference type="GO" id="GO:0009507">
    <property type="term" value="C:chloroplast"/>
    <property type="evidence" value="ECO:0007005"/>
    <property type="project" value="TAIR"/>
</dbReference>
<dbReference type="GO" id="GO:0009941">
    <property type="term" value="C:chloroplast envelope"/>
    <property type="evidence" value="ECO:0007005"/>
    <property type="project" value="TAIR"/>
</dbReference>
<dbReference type="GO" id="GO:0009707">
    <property type="term" value="C:chloroplast outer membrane"/>
    <property type="evidence" value="ECO:0000314"/>
    <property type="project" value="TAIR"/>
</dbReference>
<dbReference type="GO" id="GO:0005576">
    <property type="term" value="C:extracellular region"/>
    <property type="evidence" value="ECO:0007005"/>
    <property type="project" value="TAIR"/>
</dbReference>
<dbReference type="GO" id="GO:0005525">
    <property type="term" value="F:GTP binding"/>
    <property type="evidence" value="ECO:0000314"/>
    <property type="project" value="TAIR"/>
</dbReference>
<dbReference type="GO" id="GO:0003924">
    <property type="term" value="F:GTPase activity"/>
    <property type="evidence" value="ECO:0000314"/>
    <property type="project" value="TAIR"/>
</dbReference>
<dbReference type="GO" id="GO:0042802">
    <property type="term" value="F:identical protein binding"/>
    <property type="evidence" value="ECO:0000353"/>
    <property type="project" value="IntAct"/>
</dbReference>
<dbReference type="GO" id="GO:0046872">
    <property type="term" value="F:metal ion binding"/>
    <property type="evidence" value="ECO:0007669"/>
    <property type="project" value="UniProtKB-KW"/>
</dbReference>
<dbReference type="GO" id="GO:0042803">
    <property type="term" value="F:protein homodimerization activity"/>
    <property type="evidence" value="ECO:0000314"/>
    <property type="project" value="TAIR"/>
</dbReference>
<dbReference type="GO" id="GO:0015450">
    <property type="term" value="F:protein-transporting ATPase activity"/>
    <property type="evidence" value="ECO:0007669"/>
    <property type="project" value="InterPro"/>
</dbReference>
<dbReference type="GO" id="GO:0006886">
    <property type="term" value="P:intracellular protein transport"/>
    <property type="evidence" value="ECO:0007669"/>
    <property type="project" value="InterPro"/>
</dbReference>
<dbReference type="GO" id="GO:0045036">
    <property type="term" value="P:protein targeting to chloroplast"/>
    <property type="evidence" value="ECO:0000304"/>
    <property type="project" value="TAIR"/>
</dbReference>
<dbReference type="CDD" id="cd01853">
    <property type="entry name" value="Toc34_like"/>
    <property type="match status" value="1"/>
</dbReference>
<dbReference type="FunFam" id="3.40.50.300:FF:001070">
    <property type="entry name" value="Translocase of chloroplast"/>
    <property type="match status" value="1"/>
</dbReference>
<dbReference type="Gene3D" id="3.40.50.300">
    <property type="entry name" value="P-loop containing nucleotide triphosphate hydrolases"/>
    <property type="match status" value="1"/>
</dbReference>
<dbReference type="InterPro" id="IPR006703">
    <property type="entry name" value="G_AIG1"/>
</dbReference>
<dbReference type="InterPro" id="IPR045058">
    <property type="entry name" value="GIMA/IAN/Toc"/>
</dbReference>
<dbReference type="InterPro" id="IPR027417">
    <property type="entry name" value="P-loop_NTPase"/>
</dbReference>
<dbReference type="InterPro" id="IPR005688">
    <property type="entry name" value="Toc34"/>
</dbReference>
<dbReference type="NCBIfam" id="TIGR00991">
    <property type="entry name" value="3a0901s02IAP34"/>
    <property type="match status" value="1"/>
</dbReference>
<dbReference type="PANTHER" id="PTHR10903">
    <property type="entry name" value="GTPASE, IMAP FAMILY MEMBER-RELATED"/>
    <property type="match status" value="1"/>
</dbReference>
<dbReference type="PANTHER" id="PTHR10903:SF149">
    <property type="entry name" value="TRANSLOCASE OF CHLOROPLAST 33, CHLOROPLASTIC"/>
    <property type="match status" value="1"/>
</dbReference>
<dbReference type="Pfam" id="PF04548">
    <property type="entry name" value="AIG1"/>
    <property type="match status" value="1"/>
</dbReference>
<dbReference type="PIRSF" id="PIRSF038134">
    <property type="entry name" value="Toc34"/>
    <property type="match status" value="1"/>
</dbReference>
<dbReference type="SUPFAM" id="SSF52540">
    <property type="entry name" value="P-loop containing nucleoside triphosphate hydrolases"/>
    <property type="match status" value="1"/>
</dbReference>
<dbReference type="PROSITE" id="PS51720">
    <property type="entry name" value="G_AIG1"/>
    <property type="match status" value="1"/>
</dbReference>